<name>SECA_ELUMP</name>
<evidence type="ECO:0000255" key="1">
    <source>
        <dbReference type="HAMAP-Rule" id="MF_01382"/>
    </source>
</evidence>
<evidence type="ECO:0000256" key="2">
    <source>
        <dbReference type="SAM" id="MobiDB-lite"/>
    </source>
</evidence>
<dbReference type="EC" id="7.4.2.8" evidence="1"/>
<dbReference type="EMBL" id="CP001055">
    <property type="protein sequence ID" value="ACC97619.1"/>
    <property type="molecule type" value="Genomic_DNA"/>
</dbReference>
<dbReference type="RefSeq" id="WP_012414234.1">
    <property type="nucleotide sequence ID" value="NC_010644.1"/>
</dbReference>
<dbReference type="SMR" id="B2KAS3"/>
<dbReference type="STRING" id="445932.Emin_0052"/>
<dbReference type="KEGG" id="emi:Emin_0052"/>
<dbReference type="HOGENOM" id="CLU_005314_3_0_0"/>
<dbReference type="OrthoDB" id="9805579at2"/>
<dbReference type="Proteomes" id="UP000001029">
    <property type="component" value="Chromosome"/>
</dbReference>
<dbReference type="GO" id="GO:0031522">
    <property type="term" value="C:cell envelope Sec protein transport complex"/>
    <property type="evidence" value="ECO:0007669"/>
    <property type="project" value="TreeGrafter"/>
</dbReference>
<dbReference type="GO" id="GO:0005829">
    <property type="term" value="C:cytosol"/>
    <property type="evidence" value="ECO:0007669"/>
    <property type="project" value="TreeGrafter"/>
</dbReference>
<dbReference type="GO" id="GO:0005886">
    <property type="term" value="C:plasma membrane"/>
    <property type="evidence" value="ECO:0007669"/>
    <property type="project" value="UniProtKB-SubCell"/>
</dbReference>
<dbReference type="GO" id="GO:0005524">
    <property type="term" value="F:ATP binding"/>
    <property type="evidence" value="ECO:0007669"/>
    <property type="project" value="UniProtKB-UniRule"/>
</dbReference>
<dbReference type="GO" id="GO:0046872">
    <property type="term" value="F:metal ion binding"/>
    <property type="evidence" value="ECO:0007669"/>
    <property type="project" value="UniProtKB-KW"/>
</dbReference>
<dbReference type="GO" id="GO:0008564">
    <property type="term" value="F:protein-exporting ATPase activity"/>
    <property type="evidence" value="ECO:0007669"/>
    <property type="project" value="UniProtKB-EC"/>
</dbReference>
<dbReference type="GO" id="GO:0065002">
    <property type="term" value="P:intracellular protein transmembrane transport"/>
    <property type="evidence" value="ECO:0007669"/>
    <property type="project" value="UniProtKB-UniRule"/>
</dbReference>
<dbReference type="GO" id="GO:0017038">
    <property type="term" value="P:protein import"/>
    <property type="evidence" value="ECO:0007669"/>
    <property type="project" value="InterPro"/>
</dbReference>
<dbReference type="GO" id="GO:0006605">
    <property type="term" value="P:protein targeting"/>
    <property type="evidence" value="ECO:0007669"/>
    <property type="project" value="UniProtKB-UniRule"/>
</dbReference>
<dbReference type="GO" id="GO:0043952">
    <property type="term" value="P:protein transport by the Sec complex"/>
    <property type="evidence" value="ECO:0007669"/>
    <property type="project" value="TreeGrafter"/>
</dbReference>
<dbReference type="CDD" id="cd17928">
    <property type="entry name" value="DEXDc_SecA"/>
    <property type="match status" value="1"/>
</dbReference>
<dbReference type="CDD" id="cd18803">
    <property type="entry name" value="SF2_C_secA"/>
    <property type="match status" value="1"/>
</dbReference>
<dbReference type="FunFam" id="3.40.50.300:FF:000113">
    <property type="entry name" value="Preprotein translocase subunit SecA"/>
    <property type="match status" value="1"/>
</dbReference>
<dbReference type="FunFam" id="3.90.1440.10:FF:000001">
    <property type="entry name" value="Preprotein translocase subunit SecA"/>
    <property type="match status" value="1"/>
</dbReference>
<dbReference type="FunFam" id="3.40.50.300:FF:000334">
    <property type="entry name" value="Protein translocase subunit SecA"/>
    <property type="match status" value="1"/>
</dbReference>
<dbReference type="Gene3D" id="1.10.3060.10">
    <property type="entry name" value="Helical scaffold and wing domains of SecA"/>
    <property type="match status" value="1"/>
</dbReference>
<dbReference type="Gene3D" id="3.40.50.300">
    <property type="entry name" value="P-loop containing nucleotide triphosphate hydrolases"/>
    <property type="match status" value="3"/>
</dbReference>
<dbReference type="Gene3D" id="3.90.1440.10">
    <property type="entry name" value="SecA, preprotein cross-linking domain"/>
    <property type="match status" value="1"/>
</dbReference>
<dbReference type="HAMAP" id="MF_01382">
    <property type="entry name" value="SecA"/>
    <property type="match status" value="1"/>
</dbReference>
<dbReference type="InterPro" id="IPR014001">
    <property type="entry name" value="Helicase_ATP-bd"/>
</dbReference>
<dbReference type="InterPro" id="IPR001650">
    <property type="entry name" value="Helicase_C-like"/>
</dbReference>
<dbReference type="InterPro" id="IPR027417">
    <property type="entry name" value="P-loop_NTPase"/>
</dbReference>
<dbReference type="InterPro" id="IPR004027">
    <property type="entry name" value="SEC_C_motif"/>
</dbReference>
<dbReference type="InterPro" id="IPR000185">
    <property type="entry name" value="SecA"/>
</dbReference>
<dbReference type="InterPro" id="IPR020937">
    <property type="entry name" value="SecA_CS"/>
</dbReference>
<dbReference type="InterPro" id="IPR011115">
    <property type="entry name" value="SecA_DEAD"/>
</dbReference>
<dbReference type="InterPro" id="IPR014018">
    <property type="entry name" value="SecA_motor_DEAD"/>
</dbReference>
<dbReference type="InterPro" id="IPR011130">
    <property type="entry name" value="SecA_preprotein_X-link_dom"/>
</dbReference>
<dbReference type="InterPro" id="IPR044722">
    <property type="entry name" value="SecA_SF2_C"/>
</dbReference>
<dbReference type="InterPro" id="IPR011116">
    <property type="entry name" value="SecA_Wing/Scaffold"/>
</dbReference>
<dbReference type="InterPro" id="IPR036266">
    <property type="entry name" value="SecA_Wing/Scaffold_sf"/>
</dbReference>
<dbReference type="InterPro" id="IPR036670">
    <property type="entry name" value="SecA_X-link_sf"/>
</dbReference>
<dbReference type="NCBIfam" id="NF006630">
    <property type="entry name" value="PRK09200.1"/>
    <property type="match status" value="1"/>
</dbReference>
<dbReference type="NCBIfam" id="NF009538">
    <property type="entry name" value="PRK12904.1"/>
    <property type="match status" value="1"/>
</dbReference>
<dbReference type="NCBIfam" id="TIGR00963">
    <property type="entry name" value="secA"/>
    <property type="match status" value="1"/>
</dbReference>
<dbReference type="PANTHER" id="PTHR30612:SF0">
    <property type="entry name" value="CHLOROPLAST PROTEIN-TRANSPORTING ATPASE"/>
    <property type="match status" value="1"/>
</dbReference>
<dbReference type="PANTHER" id="PTHR30612">
    <property type="entry name" value="SECA INNER MEMBRANE COMPONENT OF SEC PROTEIN SECRETION SYSTEM"/>
    <property type="match status" value="1"/>
</dbReference>
<dbReference type="Pfam" id="PF21090">
    <property type="entry name" value="P-loop_SecA"/>
    <property type="match status" value="1"/>
</dbReference>
<dbReference type="Pfam" id="PF02810">
    <property type="entry name" value="SEC-C"/>
    <property type="match status" value="1"/>
</dbReference>
<dbReference type="Pfam" id="PF07517">
    <property type="entry name" value="SecA_DEAD"/>
    <property type="match status" value="1"/>
</dbReference>
<dbReference type="Pfam" id="PF01043">
    <property type="entry name" value="SecA_PP_bind"/>
    <property type="match status" value="1"/>
</dbReference>
<dbReference type="Pfam" id="PF07516">
    <property type="entry name" value="SecA_SW"/>
    <property type="match status" value="1"/>
</dbReference>
<dbReference type="PRINTS" id="PR00906">
    <property type="entry name" value="SECA"/>
</dbReference>
<dbReference type="SMART" id="SM00957">
    <property type="entry name" value="SecA_DEAD"/>
    <property type="match status" value="1"/>
</dbReference>
<dbReference type="SMART" id="SM00958">
    <property type="entry name" value="SecA_PP_bind"/>
    <property type="match status" value="1"/>
</dbReference>
<dbReference type="SUPFAM" id="SSF81886">
    <property type="entry name" value="Helical scaffold and wing domains of SecA"/>
    <property type="match status" value="1"/>
</dbReference>
<dbReference type="SUPFAM" id="SSF52540">
    <property type="entry name" value="P-loop containing nucleoside triphosphate hydrolases"/>
    <property type="match status" value="2"/>
</dbReference>
<dbReference type="SUPFAM" id="SSF81767">
    <property type="entry name" value="Pre-protein crosslinking domain of SecA"/>
    <property type="match status" value="1"/>
</dbReference>
<dbReference type="PROSITE" id="PS01312">
    <property type="entry name" value="SECA"/>
    <property type="match status" value="1"/>
</dbReference>
<dbReference type="PROSITE" id="PS51196">
    <property type="entry name" value="SECA_MOTOR_DEAD"/>
    <property type="match status" value="1"/>
</dbReference>
<sequence>MITTVIEKIFGTKSERDLKKLKPIIEKINSLESEILKLSDEELKQKTFYFKEQLAQGKTLDDILPESFAVVREAARRVIGLRHYDVQLLGGMVLHQGKIAEMRTGEGKTLVATLPSYLNALTGKGVHVVTVNDYLAKRDRNWMGPIHEFLGLSVGYINREMDNEGRQEMYKKDITYVTNNELGFDYLRDNMVVRKEDRVLKKLNYCIVDEVDSILIDEARTPLIISGPAEQSTDKYEVVNRIIPSLKIRKITEDDEIKAKYSGENLSAGYDAVIDEKNHNATLTEDGIAKAEKFLGVANLYNDVESEWVHHINQALRAHHLYEKDVDYVVKDGEVIIVDEFTGRLMPGRRWSDGLHQAVEAKERIKIKEENQTLATITFQNFFKLYSKLSGMTGTAMTEAGEFWQIYKLDVVEVPPNRPSKRVDGADLVYRTEREKYNAIVADIETLWKKGAPVLVGTRSIEKSEKVSAMLRSKGIPHKVLNAKYHEMEAQIISQAGAKGSVTIATNMAGRGTDIVLGGNPATPQQQAEVVELGGLHILGTERHESRRIDNQLRGRAARQGDPGSSRFYISLDDELMRLFANTSRISGILERMGMTEGQVIESRLMSRQIEGAQRMVEGHNFDIRKHLLDYDKVMNQQRTAIYHLRNKILDGESVSEQVMQMIEEVIHETFDKYYNVKHPQSTDFNTLNIFLQRAFTIDANFSGESIKGKSKEQIDGETFEAVKKAFEERSKYFNEQGVNFNEVERMLLLQIIDQAWKQHLYELDQMQKSVSLRGYAQKDPLIEYQKESYNLYQNMLNKVRDVMVEYIFRLQLPPKRRVSPIGTPSSEGGGETSGADTYSNKKIGRNDPCPCGSGKKYKKCCGADL</sequence>
<comment type="function">
    <text evidence="1">Part of the Sec protein translocase complex. Interacts with the SecYEG preprotein conducting channel. Has a central role in coupling the hydrolysis of ATP to the transfer of proteins into and across the cell membrane, serving as an ATP-driven molecular motor driving the stepwise translocation of polypeptide chains across the membrane.</text>
</comment>
<comment type="catalytic activity">
    <reaction evidence="1">
        <text>ATP + H2O + cellular proteinSide 1 = ADP + phosphate + cellular proteinSide 2.</text>
        <dbReference type="EC" id="7.4.2.8"/>
    </reaction>
</comment>
<comment type="cofactor">
    <cofactor evidence="1">
        <name>Zn(2+)</name>
        <dbReference type="ChEBI" id="CHEBI:29105"/>
    </cofactor>
    <text evidence="1">May bind 1 zinc ion per subunit.</text>
</comment>
<comment type="subunit">
    <text evidence="1">Monomer and homodimer. Part of the essential Sec protein translocation apparatus which comprises SecA, SecYEG and auxiliary proteins SecDF. Other proteins may also be involved.</text>
</comment>
<comment type="subcellular location">
    <subcellularLocation>
        <location evidence="1">Cell inner membrane</location>
        <topology evidence="1">Peripheral membrane protein</topology>
        <orientation evidence="1">Cytoplasmic side</orientation>
    </subcellularLocation>
    <subcellularLocation>
        <location evidence="1">Cytoplasm</location>
    </subcellularLocation>
    <text evidence="1">Distribution is 50-50.</text>
</comment>
<comment type="similarity">
    <text evidence="1">Belongs to the SecA family.</text>
</comment>
<feature type="chain" id="PRO_1000215111" description="Protein translocase subunit SecA">
    <location>
        <begin position="1"/>
        <end position="866"/>
    </location>
</feature>
<feature type="region of interest" description="Disordered" evidence="2">
    <location>
        <begin position="819"/>
        <end position="858"/>
    </location>
</feature>
<feature type="binding site" evidence="1">
    <location>
        <position position="87"/>
    </location>
    <ligand>
        <name>ATP</name>
        <dbReference type="ChEBI" id="CHEBI:30616"/>
    </ligand>
</feature>
<feature type="binding site" evidence="1">
    <location>
        <begin position="105"/>
        <end position="109"/>
    </location>
    <ligand>
        <name>ATP</name>
        <dbReference type="ChEBI" id="CHEBI:30616"/>
    </ligand>
</feature>
<feature type="binding site" evidence="1">
    <location>
        <position position="514"/>
    </location>
    <ligand>
        <name>ATP</name>
        <dbReference type="ChEBI" id="CHEBI:30616"/>
    </ligand>
</feature>
<feature type="binding site" evidence="1">
    <location>
        <position position="850"/>
    </location>
    <ligand>
        <name>Zn(2+)</name>
        <dbReference type="ChEBI" id="CHEBI:29105"/>
    </ligand>
</feature>
<feature type="binding site" evidence="1">
    <location>
        <position position="852"/>
    </location>
    <ligand>
        <name>Zn(2+)</name>
        <dbReference type="ChEBI" id="CHEBI:29105"/>
    </ligand>
</feature>
<feature type="binding site" evidence="1">
    <location>
        <position position="861"/>
    </location>
    <ligand>
        <name>Zn(2+)</name>
        <dbReference type="ChEBI" id="CHEBI:29105"/>
    </ligand>
</feature>
<feature type="binding site" evidence="1">
    <location>
        <position position="862"/>
    </location>
    <ligand>
        <name>Zn(2+)</name>
        <dbReference type="ChEBI" id="CHEBI:29105"/>
    </ligand>
</feature>
<reference key="1">
    <citation type="journal article" date="2009" name="Appl. Environ. Microbiol.">
        <title>Genomic analysis of 'Elusimicrobium minutum,' the first cultivated representative of the phylum 'Elusimicrobia' (formerly termite group 1).</title>
        <authorList>
            <person name="Herlemann D.P.R."/>
            <person name="Geissinger O."/>
            <person name="Ikeda-Ohtsubo W."/>
            <person name="Kunin V."/>
            <person name="Sun H."/>
            <person name="Lapidus A."/>
            <person name="Hugenholtz P."/>
            <person name="Brune A."/>
        </authorList>
    </citation>
    <scope>NUCLEOTIDE SEQUENCE [LARGE SCALE GENOMIC DNA]</scope>
    <source>
        <strain>Pei191</strain>
    </source>
</reference>
<organism>
    <name type="scientific">Elusimicrobium minutum (strain Pei191)</name>
    <dbReference type="NCBI Taxonomy" id="445932"/>
    <lineage>
        <taxon>Bacteria</taxon>
        <taxon>Pseudomonadati</taxon>
        <taxon>Elusimicrobiota</taxon>
        <taxon>Elusimicrobia</taxon>
        <taxon>Elusimicrobiales</taxon>
        <taxon>Elusimicrobiaceae</taxon>
        <taxon>Elusimicrobium</taxon>
    </lineage>
</organism>
<proteinExistence type="inferred from homology"/>
<gene>
    <name evidence="1" type="primary">secA</name>
    <name type="ordered locus">Emin_0052</name>
</gene>
<keyword id="KW-0067">ATP-binding</keyword>
<keyword id="KW-0997">Cell inner membrane</keyword>
<keyword id="KW-1003">Cell membrane</keyword>
<keyword id="KW-0963">Cytoplasm</keyword>
<keyword id="KW-0472">Membrane</keyword>
<keyword id="KW-0479">Metal-binding</keyword>
<keyword id="KW-0547">Nucleotide-binding</keyword>
<keyword id="KW-0653">Protein transport</keyword>
<keyword id="KW-1185">Reference proteome</keyword>
<keyword id="KW-1278">Translocase</keyword>
<keyword id="KW-0811">Translocation</keyword>
<keyword id="KW-0813">Transport</keyword>
<keyword id="KW-0862">Zinc</keyword>
<protein>
    <recommendedName>
        <fullName evidence="1">Protein translocase subunit SecA</fullName>
        <ecNumber evidence="1">7.4.2.8</ecNumber>
    </recommendedName>
</protein>
<accession>B2KAS3</accession>